<reference key="1">
    <citation type="submission" date="2005-10" db="EMBL/GenBank/DDBJ databases">
        <title>Complete sequence of chromosome 1 of Burkholderia sp. 383.</title>
        <authorList>
            <consortium name="US DOE Joint Genome Institute"/>
            <person name="Copeland A."/>
            <person name="Lucas S."/>
            <person name="Lapidus A."/>
            <person name="Barry K."/>
            <person name="Detter J.C."/>
            <person name="Glavina T."/>
            <person name="Hammon N."/>
            <person name="Israni S."/>
            <person name="Pitluck S."/>
            <person name="Chain P."/>
            <person name="Malfatti S."/>
            <person name="Shin M."/>
            <person name="Vergez L."/>
            <person name="Schmutz J."/>
            <person name="Larimer F."/>
            <person name="Land M."/>
            <person name="Kyrpides N."/>
            <person name="Lykidis A."/>
            <person name="Richardson P."/>
        </authorList>
    </citation>
    <scope>NUCLEOTIDE SEQUENCE [LARGE SCALE GENOMIC DNA]</scope>
    <source>
        <strain>ATCC 17760 / DSM 23089 / LMG 22485 / NCIMB 9086 / R18194 / 383</strain>
    </source>
</reference>
<comment type="function">
    <text evidence="1">An aminoacyl-tRNA editing enzyme that deacylates mischarged D-aminoacyl-tRNAs. Also deacylates mischarged glycyl-tRNA(Ala), protecting cells against glycine mischarging by AlaRS. Acts via tRNA-based rather than protein-based catalysis; rejects L-amino acids rather than detecting D-amino acids in the active site. By recycling D-aminoacyl-tRNA to D-amino acids and free tRNA molecules, this enzyme counteracts the toxicity associated with the formation of D-aminoacyl-tRNA entities in vivo and helps enforce protein L-homochirality.</text>
</comment>
<comment type="catalytic activity">
    <reaction evidence="1">
        <text>glycyl-tRNA(Ala) + H2O = tRNA(Ala) + glycine + H(+)</text>
        <dbReference type="Rhea" id="RHEA:53744"/>
        <dbReference type="Rhea" id="RHEA-COMP:9657"/>
        <dbReference type="Rhea" id="RHEA-COMP:13640"/>
        <dbReference type="ChEBI" id="CHEBI:15377"/>
        <dbReference type="ChEBI" id="CHEBI:15378"/>
        <dbReference type="ChEBI" id="CHEBI:57305"/>
        <dbReference type="ChEBI" id="CHEBI:78442"/>
        <dbReference type="ChEBI" id="CHEBI:78522"/>
        <dbReference type="EC" id="3.1.1.96"/>
    </reaction>
</comment>
<comment type="catalytic activity">
    <reaction evidence="1">
        <text>a D-aminoacyl-tRNA + H2O = a tRNA + a D-alpha-amino acid + H(+)</text>
        <dbReference type="Rhea" id="RHEA:13953"/>
        <dbReference type="Rhea" id="RHEA-COMP:10123"/>
        <dbReference type="Rhea" id="RHEA-COMP:10124"/>
        <dbReference type="ChEBI" id="CHEBI:15377"/>
        <dbReference type="ChEBI" id="CHEBI:15378"/>
        <dbReference type="ChEBI" id="CHEBI:59871"/>
        <dbReference type="ChEBI" id="CHEBI:78442"/>
        <dbReference type="ChEBI" id="CHEBI:79333"/>
        <dbReference type="EC" id="3.1.1.96"/>
    </reaction>
</comment>
<comment type="subunit">
    <text evidence="1">Homodimer.</text>
</comment>
<comment type="subcellular location">
    <subcellularLocation>
        <location evidence="1">Cytoplasm</location>
    </subcellularLocation>
</comment>
<comment type="domain">
    <text evidence="1">A Gly-cisPro motif from one monomer fits into the active site of the other monomer to allow specific chiral rejection of L-amino acids.</text>
</comment>
<comment type="similarity">
    <text evidence="1">Belongs to the DTD family.</text>
</comment>
<dbReference type="EC" id="3.1.1.96" evidence="1"/>
<dbReference type="EMBL" id="CP000151">
    <property type="protein sequence ID" value="ABB07371.1"/>
    <property type="molecule type" value="Genomic_DNA"/>
</dbReference>
<dbReference type="RefSeq" id="WP_011350959.1">
    <property type="nucleotide sequence ID" value="NZ_CADFCT010000005.1"/>
</dbReference>
<dbReference type="SMR" id="Q39JJ5"/>
<dbReference type="GeneID" id="93193083"/>
<dbReference type="KEGG" id="bur:Bcep18194_A3770"/>
<dbReference type="PATRIC" id="fig|482957.22.peg.630"/>
<dbReference type="HOGENOM" id="CLU_076901_1_1_4"/>
<dbReference type="Proteomes" id="UP000002705">
    <property type="component" value="Chromosome 1"/>
</dbReference>
<dbReference type="GO" id="GO:0005737">
    <property type="term" value="C:cytoplasm"/>
    <property type="evidence" value="ECO:0007669"/>
    <property type="project" value="UniProtKB-SubCell"/>
</dbReference>
<dbReference type="GO" id="GO:0051500">
    <property type="term" value="F:D-tyrosyl-tRNA(Tyr) deacylase activity"/>
    <property type="evidence" value="ECO:0007669"/>
    <property type="project" value="TreeGrafter"/>
</dbReference>
<dbReference type="GO" id="GO:0106026">
    <property type="term" value="F:Gly-tRNA(Ala) deacylase activity"/>
    <property type="evidence" value="ECO:0007669"/>
    <property type="project" value="UniProtKB-UniRule"/>
</dbReference>
<dbReference type="GO" id="GO:0043908">
    <property type="term" value="F:Ser(Gly)-tRNA(Ala) hydrolase activity"/>
    <property type="evidence" value="ECO:0007669"/>
    <property type="project" value="UniProtKB-UniRule"/>
</dbReference>
<dbReference type="GO" id="GO:0000049">
    <property type="term" value="F:tRNA binding"/>
    <property type="evidence" value="ECO:0007669"/>
    <property type="project" value="UniProtKB-UniRule"/>
</dbReference>
<dbReference type="GO" id="GO:0019478">
    <property type="term" value="P:D-amino acid catabolic process"/>
    <property type="evidence" value="ECO:0007669"/>
    <property type="project" value="UniProtKB-UniRule"/>
</dbReference>
<dbReference type="CDD" id="cd00563">
    <property type="entry name" value="Dtyr_deacylase"/>
    <property type="match status" value="1"/>
</dbReference>
<dbReference type="FunFam" id="3.50.80.10:FF:000001">
    <property type="entry name" value="D-aminoacyl-tRNA deacylase"/>
    <property type="match status" value="1"/>
</dbReference>
<dbReference type="Gene3D" id="3.50.80.10">
    <property type="entry name" value="D-tyrosyl-tRNA(Tyr) deacylase"/>
    <property type="match status" value="1"/>
</dbReference>
<dbReference type="HAMAP" id="MF_00518">
    <property type="entry name" value="Deacylase_Dtd"/>
    <property type="match status" value="1"/>
</dbReference>
<dbReference type="InterPro" id="IPR003732">
    <property type="entry name" value="Daa-tRNA_deacyls_DTD"/>
</dbReference>
<dbReference type="InterPro" id="IPR023509">
    <property type="entry name" value="DTD-like_sf"/>
</dbReference>
<dbReference type="NCBIfam" id="TIGR00256">
    <property type="entry name" value="D-aminoacyl-tRNA deacylase"/>
    <property type="match status" value="1"/>
</dbReference>
<dbReference type="PANTHER" id="PTHR10472:SF5">
    <property type="entry name" value="D-AMINOACYL-TRNA DEACYLASE 1"/>
    <property type="match status" value="1"/>
</dbReference>
<dbReference type="PANTHER" id="PTHR10472">
    <property type="entry name" value="D-TYROSYL-TRNA TYR DEACYLASE"/>
    <property type="match status" value="1"/>
</dbReference>
<dbReference type="Pfam" id="PF02580">
    <property type="entry name" value="Tyr_Deacylase"/>
    <property type="match status" value="1"/>
</dbReference>
<dbReference type="SUPFAM" id="SSF69500">
    <property type="entry name" value="DTD-like"/>
    <property type="match status" value="1"/>
</dbReference>
<sequence length="152" mass="16073">MIALIQRVKRADVRVGDRTTGEIGAGLLALVCAERGDTDAAADKLLAKMLGYRVFSDAAGKMNLPVSNIDGEGRAGGLLLVSQFTLAADTNSGLRPSFTPAAPPDEGARLFDYFVAAARARHPVVETGEFGADMQVSLVNDGPVTFWLQVRP</sequence>
<organism>
    <name type="scientific">Burkholderia lata (strain ATCC 17760 / DSM 23089 / LMG 22485 / NCIMB 9086 / R18194 / 383)</name>
    <dbReference type="NCBI Taxonomy" id="482957"/>
    <lineage>
        <taxon>Bacteria</taxon>
        <taxon>Pseudomonadati</taxon>
        <taxon>Pseudomonadota</taxon>
        <taxon>Betaproteobacteria</taxon>
        <taxon>Burkholderiales</taxon>
        <taxon>Burkholderiaceae</taxon>
        <taxon>Burkholderia</taxon>
        <taxon>Burkholderia cepacia complex</taxon>
    </lineage>
</organism>
<name>DTD_BURL3</name>
<evidence type="ECO:0000255" key="1">
    <source>
        <dbReference type="HAMAP-Rule" id="MF_00518"/>
    </source>
</evidence>
<proteinExistence type="inferred from homology"/>
<accession>Q39JJ5</accession>
<gene>
    <name evidence="1" type="primary">dtd</name>
    <name type="ordered locus">Bcep18194_A3770</name>
</gene>
<keyword id="KW-0963">Cytoplasm</keyword>
<keyword id="KW-0378">Hydrolase</keyword>
<keyword id="KW-0694">RNA-binding</keyword>
<keyword id="KW-0820">tRNA-binding</keyword>
<feature type="chain" id="PRO_0000259266" description="D-aminoacyl-tRNA deacylase">
    <location>
        <begin position="1"/>
        <end position="152"/>
    </location>
</feature>
<feature type="short sequence motif" description="Gly-cisPro motif, important for rejection of L-amino acids" evidence="1">
    <location>
        <begin position="142"/>
        <end position="143"/>
    </location>
</feature>
<protein>
    <recommendedName>
        <fullName evidence="1">D-aminoacyl-tRNA deacylase</fullName>
        <shortName evidence="1">DTD</shortName>
        <ecNumber evidence="1">3.1.1.96</ecNumber>
    </recommendedName>
    <alternativeName>
        <fullName evidence="1">Gly-tRNA(Ala) deacylase</fullName>
    </alternativeName>
</protein>